<name>REPB_LACPN</name>
<gene>
    <name type="primary">repB</name>
</gene>
<keyword id="KW-0235">DNA replication</keyword>
<keyword id="KW-0614">Plasmid</keyword>
<proteinExistence type="inferred from homology"/>
<feature type="chain" id="PRO_0000068328" description="Replication protein RepB">
    <location>
        <begin position="1"/>
        <end position="218"/>
    </location>
</feature>
<feature type="region of interest" description="Disordered" evidence="1">
    <location>
        <begin position="1"/>
        <end position="26"/>
    </location>
</feature>
<feature type="compositionally biased region" description="Basic residues" evidence="1">
    <location>
        <begin position="16"/>
        <end position="26"/>
    </location>
</feature>
<organism>
    <name type="scientific">Lactiplantibacillus plantarum</name>
    <name type="common">Lactobacillus plantarum</name>
    <dbReference type="NCBI Taxonomy" id="1590"/>
    <lineage>
        <taxon>Bacteria</taxon>
        <taxon>Bacillati</taxon>
        <taxon>Bacillota</taxon>
        <taxon>Bacilli</taxon>
        <taxon>Lactobacillales</taxon>
        <taxon>Lactobacillaceae</taxon>
        <taxon>Lactiplantibacillus</taxon>
    </lineage>
</organism>
<accession>P20045</accession>
<geneLocation type="plasmid">
    <name>pLB4</name>
</geneLocation>
<comment type="function">
    <text>Is essential for plasmid replication. Nicks the positive strand at the plus origin of replication.</text>
</comment>
<comment type="similarity">
    <text evidence="2">Belongs to the Gram-positive plasmids replication protein type 2 family.</text>
</comment>
<reference key="1">
    <citation type="journal article" date="1989" name="Gene">
        <title>Characterization of a cryptic plasmid from Lactobacillus plantarum.</title>
        <authorList>
            <person name="Bates E.E.M."/>
            <person name="Gilbert H.J."/>
        </authorList>
    </citation>
    <scope>NUCLEOTIDE SEQUENCE [GENOMIC DNA]</scope>
    <source>
        <strain>NCDO 1088</strain>
    </source>
</reference>
<protein>
    <recommendedName>
        <fullName>Replication protein RepB</fullName>
    </recommendedName>
</protein>
<sequence>MKSESKIDWTVPRPNKNPKTKQPYKRGRNWGIVVYPESLPENWKDIIRQEPIAVSPLHDKDVNPDGEKKKSHYHLVLNYKGNKSFEQIDEIARSLRAPAPQRISSLTGAVRYLTHMDNPEKYQYDNADIETFGGFDLESCLALSTGDKRQALRDMLAFISENEIMHLKDFADYCMSEEAPAGWFELLTERNTLFIKEYIKSNWQKQQYASKNINKMSD</sequence>
<evidence type="ECO:0000256" key="1">
    <source>
        <dbReference type="SAM" id="MobiDB-lite"/>
    </source>
</evidence>
<evidence type="ECO:0000305" key="2"/>
<dbReference type="EMBL" id="M33531">
    <property type="protein sequence ID" value="AAA25254.1"/>
    <property type="molecule type" value="Genomic_DNA"/>
</dbReference>
<dbReference type="PIR" id="JQ0181">
    <property type="entry name" value="JQ0181"/>
</dbReference>
<dbReference type="RefSeq" id="WP_010008895.1">
    <property type="nucleotide sequence ID" value="NZ_JADMQT010000036.1"/>
</dbReference>
<dbReference type="SMR" id="P20045"/>
<dbReference type="GO" id="GO:0005727">
    <property type="term" value="C:extrachromosomal circular DNA"/>
    <property type="evidence" value="ECO:0007669"/>
    <property type="project" value="InterPro"/>
</dbReference>
<dbReference type="GO" id="GO:0003677">
    <property type="term" value="F:DNA binding"/>
    <property type="evidence" value="ECO:0007669"/>
    <property type="project" value="InterPro"/>
</dbReference>
<dbReference type="GO" id="GO:0003916">
    <property type="term" value="F:DNA topoisomerase activity"/>
    <property type="evidence" value="ECO:0007669"/>
    <property type="project" value="InterPro"/>
</dbReference>
<dbReference type="GO" id="GO:0006260">
    <property type="term" value="P:DNA replication"/>
    <property type="evidence" value="ECO:0007669"/>
    <property type="project" value="UniProtKB-KW"/>
</dbReference>
<dbReference type="Gene3D" id="3.40.1310.30">
    <property type="match status" value="1"/>
</dbReference>
<dbReference type="InterPro" id="IPR002631">
    <property type="entry name" value="Plasmid_rep_OBD"/>
</dbReference>
<dbReference type="InterPro" id="IPR053923">
    <property type="entry name" value="RepB_C"/>
</dbReference>
<dbReference type="Pfam" id="PF01719">
    <property type="entry name" value="Rep_OBD"/>
    <property type="match status" value="1"/>
</dbReference>
<dbReference type="Pfam" id="PF21861">
    <property type="entry name" value="RepB_C"/>
    <property type="match status" value="1"/>
</dbReference>